<accession>A6T6F6</accession>
<comment type="function">
    <text evidence="1">Succinyl-CoA synthetase functions in the citric acid cycle (TCA), coupling the hydrolysis of succinyl-CoA to the synthesis of either ATP or GTP and thus represents the only step of substrate-level phosphorylation in the TCA. The beta subunit provides nucleotide specificity of the enzyme and binds the substrate succinate, while the binding sites for coenzyme A and phosphate are found in the alpha subunit.</text>
</comment>
<comment type="catalytic activity">
    <reaction evidence="1">
        <text>succinate + ATP + CoA = succinyl-CoA + ADP + phosphate</text>
        <dbReference type="Rhea" id="RHEA:17661"/>
        <dbReference type="ChEBI" id="CHEBI:30031"/>
        <dbReference type="ChEBI" id="CHEBI:30616"/>
        <dbReference type="ChEBI" id="CHEBI:43474"/>
        <dbReference type="ChEBI" id="CHEBI:57287"/>
        <dbReference type="ChEBI" id="CHEBI:57292"/>
        <dbReference type="ChEBI" id="CHEBI:456216"/>
        <dbReference type="EC" id="6.2.1.5"/>
    </reaction>
    <physiologicalReaction direction="right-to-left" evidence="1">
        <dbReference type="Rhea" id="RHEA:17663"/>
    </physiologicalReaction>
</comment>
<comment type="catalytic activity">
    <reaction evidence="1">
        <text>GTP + succinate + CoA = succinyl-CoA + GDP + phosphate</text>
        <dbReference type="Rhea" id="RHEA:22120"/>
        <dbReference type="ChEBI" id="CHEBI:30031"/>
        <dbReference type="ChEBI" id="CHEBI:37565"/>
        <dbReference type="ChEBI" id="CHEBI:43474"/>
        <dbReference type="ChEBI" id="CHEBI:57287"/>
        <dbReference type="ChEBI" id="CHEBI:57292"/>
        <dbReference type="ChEBI" id="CHEBI:58189"/>
    </reaction>
    <physiologicalReaction direction="right-to-left" evidence="1">
        <dbReference type="Rhea" id="RHEA:22122"/>
    </physiologicalReaction>
</comment>
<comment type="cofactor">
    <cofactor evidence="1">
        <name>Mg(2+)</name>
        <dbReference type="ChEBI" id="CHEBI:18420"/>
    </cofactor>
    <text evidence="1">Binds 1 Mg(2+) ion per subunit.</text>
</comment>
<comment type="pathway">
    <text evidence="1">Carbohydrate metabolism; tricarboxylic acid cycle; succinate from succinyl-CoA (ligase route): step 1/1.</text>
</comment>
<comment type="subunit">
    <text evidence="1">Heterotetramer of two alpha and two beta subunits.</text>
</comment>
<comment type="similarity">
    <text evidence="1">Belongs to the succinate/malate CoA ligase beta subunit family.</text>
</comment>
<gene>
    <name evidence="1" type="primary">sucC</name>
    <name type="ordered locus">KPN78578_07160</name>
    <name type="ORF">KPN_00734</name>
</gene>
<feature type="chain" id="PRO_1000082111" description="Succinate--CoA ligase [ADP-forming] subunit beta">
    <location>
        <begin position="1"/>
        <end position="388"/>
    </location>
</feature>
<feature type="domain" description="ATP-grasp" evidence="1">
    <location>
        <begin position="9"/>
        <end position="244"/>
    </location>
</feature>
<feature type="binding site" evidence="1">
    <location>
        <position position="46"/>
    </location>
    <ligand>
        <name>ATP</name>
        <dbReference type="ChEBI" id="CHEBI:30616"/>
    </ligand>
</feature>
<feature type="binding site" evidence="1">
    <location>
        <begin position="53"/>
        <end position="55"/>
    </location>
    <ligand>
        <name>ATP</name>
        <dbReference type="ChEBI" id="CHEBI:30616"/>
    </ligand>
</feature>
<feature type="binding site" evidence="1">
    <location>
        <position position="99"/>
    </location>
    <ligand>
        <name>ATP</name>
        <dbReference type="ChEBI" id="CHEBI:30616"/>
    </ligand>
</feature>
<feature type="binding site" evidence="1">
    <location>
        <position position="102"/>
    </location>
    <ligand>
        <name>ATP</name>
        <dbReference type="ChEBI" id="CHEBI:30616"/>
    </ligand>
</feature>
<feature type="binding site" evidence="1">
    <location>
        <position position="107"/>
    </location>
    <ligand>
        <name>ATP</name>
        <dbReference type="ChEBI" id="CHEBI:30616"/>
    </ligand>
</feature>
<feature type="binding site" evidence="1">
    <location>
        <position position="199"/>
    </location>
    <ligand>
        <name>Mg(2+)</name>
        <dbReference type="ChEBI" id="CHEBI:18420"/>
    </ligand>
</feature>
<feature type="binding site" evidence="1">
    <location>
        <position position="213"/>
    </location>
    <ligand>
        <name>Mg(2+)</name>
        <dbReference type="ChEBI" id="CHEBI:18420"/>
    </ligand>
</feature>
<feature type="binding site" evidence="1">
    <location>
        <position position="264"/>
    </location>
    <ligand>
        <name>substrate</name>
        <note>ligand shared with subunit alpha</note>
    </ligand>
</feature>
<feature type="binding site" evidence="1">
    <location>
        <begin position="321"/>
        <end position="323"/>
    </location>
    <ligand>
        <name>substrate</name>
        <note>ligand shared with subunit alpha</note>
    </ligand>
</feature>
<name>SUCC_KLEP7</name>
<reference key="1">
    <citation type="submission" date="2006-09" db="EMBL/GenBank/DDBJ databases">
        <authorList>
            <consortium name="The Klebsiella pneumonia Genome Sequencing Project"/>
            <person name="McClelland M."/>
            <person name="Sanderson E.K."/>
            <person name="Spieth J."/>
            <person name="Clifton W.S."/>
            <person name="Latreille P."/>
            <person name="Sabo A."/>
            <person name="Pepin K."/>
            <person name="Bhonagiri V."/>
            <person name="Porwollik S."/>
            <person name="Ali J."/>
            <person name="Wilson R.K."/>
        </authorList>
    </citation>
    <scope>NUCLEOTIDE SEQUENCE [LARGE SCALE GENOMIC DNA]</scope>
    <source>
        <strain>ATCC 700721 / MGH 78578</strain>
    </source>
</reference>
<keyword id="KW-0067">ATP-binding</keyword>
<keyword id="KW-0436">Ligase</keyword>
<keyword id="KW-0460">Magnesium</keyword>
<keyword id="KW-0479">Metal-binding</keyword>
<keyword id="KW-0547">Nucleotide-binding</keyword>
<keyword id="KW-0816">Tricarboxylic acid cycle</keyword>
<evidence type="ECO:0000255" key="1">
    <source>
        <dbReference type="HAMAP-Rule" id="MF_00558"/>
    </source>
</evidence>
<protein>
    <recommendedName>
        <fullName evidence="1">Succinate--CoA ligase [ADP-forming] subunit beta</fullName>
        <ecNumber evidence="1">6.2.1.5</ecNumber>
    </recommendedName>
    <alternativeName>
        <fullName evidence="1">Succinyl-CoA synthetase subunit beta</fullName>
        <shortName evidence="1">SCS-beta</shortName>
    </alternativeName>
</protein>
<proteinExistence type="inferred from homology"/>
<organism>
    <name type="scientific">Klebsiella pneumoniae subsp. pneumoniae (strain ATCC 700721 / MGH 78578)</name>
    <dbReference type="NCBI Taxonomy" id="272620"/>
    <lineage>
        <taxon>Bacteria</taxon>
        <taxon>Pseudomonadati</taxon>
        <taxon>Pseudomonadota</taxon>
        <taxon>Gammaproteobacteria</taxon>
        <taxon>Enterobacterales</taxon>
        <taxon>Enterobacteriaceae</taxon>
        <taxon>Klebsiella/Raoultella group</taxon>
        <taxon>Klebsiella</taxon>
        <taxon>Klebsiella pneumoniae complex</taxon>
    </lineage>
</organism>
<sequence length="388" mass="41503">MNLHEYQAKQLFARYGLPAPVGYACTTPREAEEAASKIGAGPWVVKCQVHAGGRGKAGGVKVVKSKEEIRAFAEHWLGKRLVTYQTDANGQPVNQILVEAATDIDKELYLGAVVDRSSRRVVFMASTEGGVEIEKVAEETPHLIHKIAIDPLAGPMPYQGRELAFKLGLEGKQVQQFTKIFMGLATIFLERDLALIEINPLVITKQGDLICLDGKLGADGNALFRQPDLREMRDQSQEDPREAQAAQWELNYVALDGNIGCMVNGAGLAMGTMDIVKLHGGEPANFLDVGGGATKERVTEAFKIILSDDNVKAVLVNIFGGIVRCDLIADGIIGAVAEVGVNVPVVVRLEGNNAELGAKKLADSGLNIIAAKSLTDAAQQVVAAVEGK</sequence>
<dbReference type="EC" id="6.2.1.5" evidence="1"/>
<dbReference type="EMBL" id="CP000647">
    <property type="protein sequence ID" value="ABR76177.1"/>
    <property type="molecule type" value="Genomic_DNA"/>
</dbReference>
<dbReference type="RefSeq" id="WP_002895039.1">
    <property type="nucleotide sequence ID" value="NC_009648.1"/>
</dbReference>
<dbReference type="SMR" id="A6T6F6"/>
<dbReference type="STRING" id="272620.KPN_00734"/>
<dbReference type="jPOST" id="A6T6F6"/>
<dbReference type="PaxDb" id="272620-KPN_00734"/>
<dbReference type="EnsemblBacteria" id="ABR76177">
    <property type="protein sequence ID" value="ABR76177"/>
    <property type="gene ID" value="KPN_00734"/>
</dbReference>
<dbReference type="GeneID" id="93274339"/>
<dbReference type="KEGG" id="kpn:KPN_00734"/>
<dbReference type="HOGENOM" id="CLU_037430_0_2_6"/>
<dbReference type="UniPathway" id="UPA00223">
    <property type="reaction ID" value="UER00999"/>
</dbReference>
<dbReference type="Proteomes" id="UP000000265">
    <property type="component" value="Chromosome"/>
</dbReference>
<dbReference type="GO" id="GO:0005829">
    <property type="term" value="C:cytosol"/>
    <property type="evidence" value="ECO:0007669"/>
    <property type="project" value="TreeGrafter"/>
</dbReference>
<dbReference type="GO" id="GO:0042709">
    <property type="term" value="C:succinate-CoA ligase complex"/>
    <property type="evidence" value="ECO:0007669"/>
    <property type="project" value="TreeGrafter"/>
</dbReference>
<dbReference type="GO" id="GO:0005524">
    <property type="term" value="F:ATP binding"/>
    <property type="evidence" value="ECO:0007669"/>
    <property type="project" value="UniProtKB-UniRule"/>
</dbReference>
<dbReference type="GO" id="GO:0000287">
    <property type="term" value="F:magnesium ion binding"/>
    <property type="evidence" value="ECO:0007669"/>
    <property type="project" value="UniProtKB-UniRule"/>
</dbReference>
<dbReference type="GO" id="GO:0004775">
    <property type="term" value="F:succinate-CoA ligase (ADP-forming) activity"/>
    <property type="evidence" value="ECO:0007669"/>
    <property type="project" value="UniProtKB-UniRule"/>
</dbReference>
<dbReference type="GO" id="GO:0004776">
    <property type="term" value="F:succinate-CoA ligase (GDP-forming) activity"/>
    <property type="evidence" value="ECO:0007669"/>
    <property type="project" value="RHEA"/>
</dbReference>
<dbReference type="GO" id="GO:0006104">
    <property type="term" value="P:succinyl-CoA metabolic process"/>
    <property type="evidence" value="ECO:0007669"/>
    <property type="project" value="TreeGrafter"/>
</dbReference>
<dbReference type="GO" id="GO:0006099">
    <property type="term" value="P:tricarboxylic acid cycle"/>
    <property type="evidence" value="ECO:0007669"/>
    <property type="project" value="UniProtKB-UniRule"/>
</dbReference>
<dbReference type="FunFam" id="3.30.1490.20:FF:000002">
    <property type="entry name" value="Succinate--CoA ligase [ADP-forming] subunit beta"/>
    <property type="match status" value="1"/>
</dbReference>
<dbReference type="FunFam" id="3.30.470.20:FF:000002">
    <property type="entry name" value="Succinate--CoA ligase [ADP-forming] subunit beta"/>
    <property type="match status" value="1"/>
</dbReference>
<dbReference type="FunFam" id="3.40.50.261:FF:000001">
    <property type="entry name" value="Succinate--CoA ligase [ADP-forming] subunit beta"/>
    <property type="match status" value="1"/>
</dbReference>
<dbReference type="Gene3D" id="3.30.1490.20">
    <property type="entry name" value="ATP-grasp fold, A domain"/>
    <property type="match status" value="1"/>
</dbReference>
<dbReference type="Gene3D" id="3.30.470.20">
    <property type="entry name" value="ATP-grasp fold, B domain"/>
    <property type="match status" value="1"/>
</dbReference>
<dbReference type="Gene3D" id="3.40.50.261">
    <property type="entry name" value="Succinyl-CoA synthetase domains"/>
    <property type="match status" value="1"/>
</dbReference>
<dbReference type="HAMAP" id="MF_00558">
    <property type="entry name" value="Succ_CoA_beta"/>
    <property type="match status" value="1"/>
</dbReference>
<dbReference type="InterPro" id="IPR011761">
    <property type="entry name" value="ATP-grasp"/>
</dbReference>
<dbReference type="InterPro" id="IPR013650">
    <property type="entry name" value="ATP-grasp_succ-CoA_synth-type"/>
</dbReference>
<dbReference type="InterPro" id="IPR013815">
    <property type="entry name" value="ATP_grasp_subdomain_1"/>
</dbReference>
<dbReference type="InterPro" id="IPR017866">
    <property type="entry name" value="Succ-CoA_synthase_bsu_CS"/>
</dbReference>
<dbReference type="InterPro" id="IPR005811">
    <property type="entry name" value="SUCC_ACL_C"/>
</dbReference>
<dbReference type="InterPro" id="IPR005809">
    <property type="entry name" value="Succ_CoA_ligase-like_bsu"/>
</dbReference>
<dbReference type="InterPro" id="IPR016102">
    <property type="entry name" value="Succinyl-CoA_synth-like"/>
</dbReference>
<dbReference type="NCBIfam" id="NF001913">
    <property type="entry name" value="PRK00696.1"/>
    <property type="match status" value="1"/>
</dbReference>
<dbReference type="NCBIfam" id="TIGR01016">
    <property type="entry name" value="sucCoAbeta"/>
    <property type="match status" value="1"/>
</dbReference>
<dbReference type="PANTHER" id="PTHR11815:SF10">
    <property type="entry name" value="SUCCINATE--COA LIGASE [GDP-FORMING] SUBUNIT BETA, MITOCHONDRIAL"/>
    <property type="match status" value="1"/>
</dbReference>
<dbReference type="PANTHER" id="PTHR11815">
    <property type="entry name" value="SUCCINYL-COA SYNTHETASE BETA CHAIN"/>
    <property type="match status" value="1"/>
</dbReference>
<dbReference type="Pfam" id="PF08442">
    <property type="entry name" value="ATP-grasp_2"/>
    <property type="match status" value="1"/>
</dbReference>
<dbReference type="Pfam" id="PF00549">
    <property type="entry name" value="Ligase_CoA"/>
    <property type="match status" value="1"/>
</dbReference>
<dbReference type="PIRSF" id="PIRSF001554">
    <property type="entry name" value="SucCS_beta"/>
    <property type="match status" value="1"/>
</dbReference>
<dbReference type="SUPFAM" id="SSF56059">
    <property type="entry name" value="Glutathione synthetase ATP-binding domain-like"/>
    <property type="match status" value="1"/>
</dbReference>
<dbReference type="SUPFAM" id="SSF52210">
    <property type="entry name" value="Succinyl-CoA synthetase domains"/>
    <property type="match status" value="1"/>
</dbReference>
<dbReference type="PROSITE" id="PS50975">
    <property type="entry name" value="ATP_GRASP"/>
    <property type="match status" value="1"/>
</dbReference>
<dbReference type="PROSITE" id="PS01217">
    <property type="entry name" value="SUCCINYL_COA_LIG_3"/>
    <property type="match status" value="1"/>
</dbReference>